<name>SYL_WOLPM</name>
<protein>
    <recommendedName>
        <fullName evidence="1">Leucine--tRNA ligase</fullName>
        <ecNumber evidence="1">6.1.1.4</ecNumber>
    </recommendedName>
    <alternativeName>
        <fullName evidence="1">Leucyl-tRNA synthetase</fullName>
        <shortName evidence="1">LeuRS</shortName>
    </alternativeName>
</protein>
<accession>Q73IT7</accession>
<gene>
    <name evidence="1" type="primary">leuS</name>
    <name type="ordered locus">WD_0060</name>
</gene>
<organism>
    <name type="scientific">Wolbachia pipientis wMel</name>
    <dbReference type="NCBI Taxonomy" id="163164"/>
    <lineage>
        <taxon>Bacteria</taxon>
        <taxon>Pseudomonadati</taxon>
        <taxon>Pseudomonadota</taxon>
        <taxon>Alphaproteobacteria</taxon>
        <taxon>Rickettsiales</taxon>
        <taxon>Anaplasmataceae</taxon>
        <taxon>Wolbachieae</taxon>
        <taxon>Wolbachia</taxon>
    </lineage>
</organism>
<evidence type="ECO:0000255" key="1">
    <source>
        <dbReference type="HAMAP-Rule" id="MF_00049"/>
    </source>
</evidence>
<dbReference type="EC" id="6.1.1.4" evidence="1"/>
<dbReference type="EMBL" id="AE017196">
    <property type="protein sequence ID" value="AAS13823.1"/>
    <property type="molecule type" value="Genomic_DNA"/>
</dbReference>
<dbReference type="RefSeq" id="WP_010962340.1">
    <property type="nucleotide sequence ID" value="NZ_OX384529.1"/>
</dbReference>
<dbReference type="SMR" id="Q73IT7"/>
<dbReference type="EnsemblBacteria" id="AAS13823">
    <property type="protein sequence ID" value="AAS13823"/>
    <property type="gene ID" value="WD_0060"/>
</dbReference>
<dbReference type="GeneID" id="70035550"/>
<dbReference type="KEGG" id="wol:WD_0060"/>
<dbReference type="eggNOG" id="COG0495">
    <property type="taxonomic scope" value="Bacteria"/>
</dbReference>
<dbReference type="Proteomes" id="UP000008215">
    <property type="component" value="Chromosome"/>
</dbReference>
<dbReference type="GO" id="GO:0005829">
    <property type="term" value="C:cytosol"/>
    <property type="evidence" value="ECO:0007669"/>
    <property type="project" value="TreeGrafter"/>
</dbReference>
<dbReference type="GO" id="GO:0002161">
    <property type="term" value="F:aminoacyl-tRNA deacylase activity"/>
    <property type="evidence" value="ECO:0007669"/>
    <property type="project" value="InterPro"/>
</dbReference>
<dbReference type="GO" id="GO:0005524">
    <property type="term" value="F:ATP binding"/>
    <property type="evidence" value="ECO:0007669"/>
    <property type="project" value="UniProtKB-UniRule"/>
</dbReference>
<dbReference type="GO" id="GO:0004823">
    <property type="term" value="F:leucine-tRNA ligase activity"/>
    <property type="evidence" value="ECO:0007669"/>
    <property type="project" value="UniProtKB-UniRule"/>
</dbReference>
<dbReference type="GO" id="GO:0006429">
    <property type="term" value="P:leucyl-tRNA aminoacylation"/>
    <property type="evidence" value="ECO:0007669"/>
    <property type="project" value="UniProtKB-UniRule"/>
</dbReference>
<dbReference type="CDD" id="cd07958">
    <property type="entry name" value="Anticodon_Ia_Leu_BEm"/>
    <property type="match status" value="1"/>
</dbReference>
<dbReference type="CDD" id="cd00812">
    <property type="entry name" value="LeuRS_core"/>
    <property type="match status" value="1"/>
</dbReference>
<dbReference type="FunFam" id="1.10.730.10:FF:000002">
    <property type="entry name" value="Leucine--tRNA ligase"/>
    <property type="match status" value="1"/>
</dbReference>
<dbReference type="Gene3D" id="3.40.50.620">
    <property type="entry name" value="HUPs"/>
    <property type="match status" value="2"/>
</dbReference>
<dbReference type="Gene3D" id="1.10.730.10">
    <property type="entry name" value="Isoleucyl-tRNA Synthetase, Domain 1"/>
    <property type="match status" value="1"/>
</dbReference>
<dbReference type="HAMAP" id="MF_00049_B">
    <property type="entry name" value="Leu_tRNA_synth_B"/>
    <property type="match status" value="1"/>
</dbReference>
<dbReference type="InterPro" id="IPR001412">
    <property type="entry name" value="aa-tRNA-synth_I_CS"/>
</dbReference>
<dbReference type="InterPro" id="IPR002300">
    <property type="entry name" value="aa-tRNA-synth_Ia"/>
</dbReference>
<dbReference type="InterPro" id="IPR002302">
    <property type="entry name" value="Leu-tRNA-ligase"/>
</dbReference>
<dbReference type="InterPro" id="IPR025709">
    <property type="entry name" value="Leu_tRNA-synth_edit"/>
</dbReference>
<dbReference type="InterPro" id="IPR013155">
    <property type="entry name" value="M/V/L/I-tRNA-synth_anticd-bd"/>
</dbReference>
<dbReference type="InterPro" id="IPR015413">
    <property type="entry name" value="Methionyl/Leucyl_tRNA_Synth"/>
</dbReference>
<dbReference type="InterPro" id="IPR014729">
    <property type="entry name" value="Rossmann-like_a/b/a_fold"/>
</dbReference>
<dbReference type="InterPro" id="IPR009080">
    <property type="entry name" value="tRNAsynth_Ia_anticodon-bd"/>
</dbReference>
<dbReference type="InterPro" id="IPR009008">
    <property type="entry name" value="Val/Leu/Ile-tRNA-synth_edit"/>
</dbReference>
<dbReference type="NCBIfam" id="TIGR00396">
    <property type="entry name" value="leuS_bact"/>
    <property type="match status" value="1"/>
</dbReference>
<dbReference type="PANTHER" id="PTHR43740:SF2">
    <property type="entry name" value="LEUCINE--TRNA LIGASE, MITOCHONDRIAL"/>
    <property type="match status" value="1"/>
</dbReference>
<dbReference type="PANTHER" id="PTHR43740">
    <property type="entry name" value="LEUCYL-TRNA SYNTHETASE"/>
    <property type="match status" value="1"/>
</dbReference>
<dbReference type="Pfam" id="PF08264">
    <property type="entry name" value="Anticodon_1"/>
    <property type="match status" value="1"/>
</dbReference>
<dbReference type="Pfam" id="PF00133">
    <property type="entry name" value="tRNA-synt_1"/>
    <property type="match status" value="1"/>
</dbReference>
<dbReference type="Pfam" id="PF13603">
    <property type="entry name" value="tRNA-synt_1_2"/>
    <property type="match status" value="1"/>
</dbReference>
<dbReference type="Pfam" id="PF09334">
    <property type="entry name" value="tRNA-synt_1g"/>
    <property type="match status" value="1"/>
</dbReference>
<dbReference type="PRINTS" id="PR00985">
    <property type="entry name" value="TRNASYNTHLEU"/>
</dbReference>
<dbReference type="SUPFAM" id="SSF47323">
    <property type="entry name" value="Anticodon-binding domain of a subclass of class I aminoacyl-tRNA synthetases"/>
    <property type="match status" value="1"/>
</dbReference>
<dbReference type="SUPFAM" id="SSF52374">
    <property type="entry name" value="Nucleotidylyl transferase"/>
    <property type="match status" value="1"/>
</dbReference>
<dbReference type="SUPFAM" id="SSF50677">
    <property type="entry name" value="ValRS/IleRS/LeuRS editing domain"/>
    <property type="match status" value="1"/>
</dbReference>
<dbReference type="PROSITE" id="PS00178">
    <property type="entry name" value="AA_TRNA_LIGASE_I"/>
    <property type="match status" value="1"/>
</dbReference>
<sequence length="838" mass="95661">MKYDFKSVEKFYQDKWDFSVSKSGKQEKCYVLEMFPYPSGKIHMGHLRNYAIGDVIARYKRANGFEVLHPIGWDAFGLPAENAARDNNISPETWTKENIDNMRTQLKSIGLSYNWERELSTCEPDYYKHEQKFFLDFLKHGLAYRKESWVNWDPVDQTVLANEQVVDGKGWRSGAVVEKRKLSQWFLKITDFAEDLLKCLQSLKNWPEKVKTMQERWIGKSEGATIEFEVVGLNKKLKVFTTYPHTLFGASFCAVAAEHPIVQDLKNGSSVVIPVLDTGIQEIKSKRENDEKIGVYTGLNVKHPFLDKELPLYIANFVLMEYGEGAIFGCPAHDQRDFEFAQKYNLPIIPVISSAHLGVIPARDQNSYNGSQCQATQMTKEAYTGDGTMFNSEFLNGLMVSEAKEAIVKKFEEKKIGKKTINYRLHDWGVSRQRYWGCPIPIIYCKDCGTVPVPEKDLPVVLPIDVEFTSGGNPLDKHPTWKFVDCPKCGKQAERETDTFDTFFESSWYFAAFCSEDKSIDKDACNRFMPVDYYIGGIEHAILHLLYSRFFCRALTKCGYFDIKEPFSTLITQGMVCHATYKDENGKWLFPAEAKELIARGAKVQVGKVEKMSKSKKNTVDPNFIIEKYGADTARLFVLSDTPPEKDMEWSDDGVEGCSRYVNKLWRMVMQLRPVNIHYDNENVTGGLLEYRKKIHKLLHGLTDDLENCRLNCVVAKFREMTNLIAEIDVKTGKSLIDEGICILIRVIEPFIPHLAESLWQEIGGQPWPKADESLLVDDTVTIAVQINGKLRTTIKVAINLPQEELKKIAIDSVSSKIDQSKVRTVYAVPNKIVNIVI</sequence>
<comment type="catalytic activity">
    <reaction evidence="1">
        <text>tRNA(Leu) + L-leucine + ATP = L-leucyl-tRNA(Leu) + AMP + diphosphate</text>
        <dbReference type="Rhea" id="RHEA:11688"/>
        <dbReference type="Rhea" id="RHEA-COMP:9613"/>
        <dbReference type="Rhea" id="RHEA-COMP:9622"/>
        <dbReference type="ChEBI" id="CHEBI:30616"/>
        <dbReference type="ChEBI" id="CHEBI:33019"/>
        <dbReference type="ChEBI" id="CHEBI:57427"/>
        <dbReference type="ChEBI" id="CHEBI:78442"/>
        <dbReference type="ChEBI" id="CHEBI:78494"/>
        <dbReference type="ChEBI" id="CHEBI:456215"/>
        <dbReference type="EC" id="6.1.1.4"/>
    </reaction>
</comment>
<comment type="subcellular location">
    <subcellularLocation>
        <location evidence="1">Cytoplasm</location>
    </subcellularLocation>
</comment>
<comment type="similarity">
    <text evidence="1">Belongs to the class-I aminoacyl-tRNA synthetase family.</text>
</comment>
<proteinExistence type="inferred from homology"/>
<reference key="1">
    <citation type="journal article" date="2004" name="PLoS Biol.">
        <title>Phylogenomics of the reproductive parasite Wolbachia pipientis wMel: a streamlined genome overrun by mobile genetic elements.</title>
        <authorList>
            <person name="Wu M."/>
            <person name="Sun L.V."/>
            <person name="Vamathevan J.J."/>
            <person name="Riegler M."/>
            <person name="DeBoy R.T."/>
            <person name="Brownlie J.C."/>
            <person name="McGraw E.A."/>
            <person name="Martin W."/>
            <person name="Esser C."/>
            <person name="Ahmadinejad N."/>
            <person name="Wiegand C."/>
            <person name="Madupu R."/>
            <person name="Beanan M.J."/>
            <person name="Brinkac L.M."/>
            <person name="Daugherty S.C."/>
            <person name="Durkin A.S."/>
            <person name="Kolonay J.F."/>
            <person name="Nelson W.C."/>
            <person name="Mohamoud Y."/>
            <person name="Lee P."/>
            <person name="Berry K.J."/>
            <person name="Young M.B."/>
            <person name="Utterback T.R."/>
            <person name="Weidman J.F."/>
            <person name="Nierman W.C."/>
            <person name="Paulsen I.T."/>
            <person name="Nelson K.E."/>
            <person name="Tettelin H."/>
            <person name="O'Neill S.L."/>
            <person name="Eisen J.A."/>
        </authorList>
    </citation>
    <scope>NUCLEOTIDE SEQUENCE [LARGE SCALE GENOMIC DNA]</scope>
</reference>
<keyword id="KW-0030">Aminoacyl-tRNA synthetase</keyword>
<keyword id="KW-0067">ATP-binding</keyword>
<keyword id="KW-0963">Cytoplasm</keyword>
<keyword id="KW-0436">Ligase</keyword>
<keyword id="KW-0547">Nucleotide-binding</keyword>
<keyword id="KW-0648">Protein biosynthesis</keyword>
<feature type="chain" id="PRO_0000152118" description="Leucine--tRNA ligase">
    <location>
        <begin position="1"/>
        <end position="838"/>
    </location>
</feature>
<feature type="short sequence motif" description="'HIGH' region">
    <location>
        <begin position="36"/>
        <end position="46"/>
    </location>
</feature>
<feature type="short sequence motif" description="'KMSKS' region">
    <location>
        <begin position="611"/>
        <end position="615"/>
    </location>
</feature>
<feature type="binding site" evidence="1">
    <location>
        <position position="614"/>
    </location>
    <ligand>
        <name>ATP</name>
        <dbReference type="ChEBI" id="CHEBI:30616"/>
    </ligand>
</feature>